<dbReference type="EMBL" id="FO081756">
    <property type="protein sequence ID" value="CCD73694.1"/>
    <property type="molecule type" value="Genomic_DNA"/>
</dbReference>
<dbReference type="PIR" id="T26649">
    <property type="entry name" value="T26649"/>
</dbReference>
<dbReference type="RefSeq" id="NP_494913.1">
    <property type="nucleotide sequence ID" value="NM_062512.4"/>
</dbReference>
<dbReference type="SMR" id="Q23237"/>
<dbReference type="BioGRID" id="39211">
    <property type="interactions" value="48"/>
</dbReference>
<dbReference type="DIP" id="DIP-25063N"/>
<dbReference type="FunCoup" id="Q23237">
    <property type="interactions" value="2835"/>
</dbReference>
<dbReference type="IntAct" id="Q23237">
    <property type="interactions" value="7"/>
</dbReference>
<dbReference type="MINT" id="Q23237"/>
<dbReference type="STRING" id="6239.Y38A8.2.1"/>
<dbReference type="PaxDb" id="6239-Y38A8.2"/>
<dbReference type="PeptideAtlas" id="Q23237"/>
<dbReference type="EnsemblMetazoa" id="Y38A8.2.1">
    <property type="protein sequence ID" value="Y38A8.2.1"/>
    <property type="gene ID" value="WBGene00003949"/>
</dbReference>
<dbReference type="GeneID" id="173858"/>
<dbReference type="KEGG" id="cel:CELE_Y38A8.2"/>
<dbReference type="UCSC" id="Y38A8.2.1">
    <property type="organism name" value="c. elegans"/>
</dbReference>
<dbReference type="AGR" id="WB:WBGene00003949"/>
<dbReference type="CTD" id="173858"/>
<dbReference type="WormBase" id="Y38A8.2">
    <property type="protein sequence ID" value="CE07571"/>
    <property type="gene ID" value="WBGene00003949"/>
    <property type="gene designation" value="pbs-3"/>
</dbReference>
<dbReference type="eggNOG" id="KOG0180">
    <property type="taxonomic scope" value="Eukaryota"/>
</dbReference>
<dbReference type="GeneTree" id="ENSGT00550000074820"/>
<dbReference type="HOGENOM" id="CLU_035750_10_0_1"/>
<dbReference type="InParanoid" id="Q23237"/>
<dbReference type="OMA" id="CSEQLYG"/>
<dbReference type="OrthoDB" id="204949at2759"/>
<dbReference type="PhylomeDB" id="Q23237"/>
<dbReference type="Reactome" id="R-CEL-1234176">
    <property type="pathway name" value="Oxygen-dependent proline hydroxylation of Hypoxia-inducible Factor Alpha"/>
</dbReference>
<dbReference type="Reactome" id="R-CEL-1236978">
    <property type="pathway name" value="Cross-presentation of soluble exogenous antigens (endosomes)"/>
</dbReference>
<dbReference type="Reactome" id="R-CEL-187577">
    <property type="pathway name" value="SCF(Skp2)-mediated degradation of p27/p21"/>
</dbReference>
<dbReference type="Reactome" id="R-CEL-195253">
    <property type="pathway name" value="Degradation of beta-catenin by the destruction complex"/>
</dbReference>
<dbReference type="Reactome" id="R-CEL-349425">
    <property type="pathway name" value="Autodegradation of the E3 ubiquitin ligase COP1"/>
</dbReference>
<dbReference type="Reactome" id="R-CEL-350562">
    <property type="pathway name" value="Regulation of ornithine decarboxylase (ODC)"/>
</dbReference>
<dbReference type="Reactome" id="R-CEL-382556">
    <property type="pathway name" value="ABC-family proteins mediated transport"/>
</dbReference>
<dbReference type="Reactome" id="R-CEL-4608870">
    <property type="pathway name" value="Asymmetric localization of PCP proteins"/>
</dbReference>
<dbReference type="Reactome" id="R-CEL-4641258">
    <property type="pathway name" value="Degradation of DVL"/>
</dbReference>
<dbReference type="Reactome" id="R-CEL-5632684">
    <property type="pathway name" value="Hedgehog 'on' state"/>
</dbReference>
<dbReference type="Reactome" id="R-CEL-5687128">
    <property type="pathway name" value="MAPK6/MAPK4 signaling"/>
</dbReference>
<dbReference type="Reactome" id="R-CEL-5689603">
    <property type="pathway name" value="UCH proteinases"/>
</dbReference>
<dbReference type="Reactome" id="R-CEL-5689880">
    <property type="pathway name" value="Ub-specific processing proteases"/>
</dbReference>
<dbReference type="Reactome" id="R-CEL-68949">
    <property type="pathway name" value="Orc1 removal from chromatin"/>
</dbReference>
<dbReference type="Reactome" id="R-CEL-69017">
    <property type="pathway name" value="CDK-mediated phosphorylation and removal of Cdc6"/>
</dbReference>
<dbReference type="Reactome" id="R-CEL-69601">
    <property type="pathway name" value="Ubiquitin Mediated Degradation of Phosphorylated Cdc25A"/>
</dbReference>
<dbReference type="Reactome" id="R-CEL-75815">
    <property type="pathway name" value="Ubiquitin-dependent degradation of Cyclin D"/>
</dbReference>
<dbReference type="Reactome" id="R-CEL-8854050">
    <property type="pathway name" value="FBXL7 down-regulates AURKA during mitotic entry and in early mitosis"/>
</dbReference>
<dbReference type="Reactome" id="R-CEL-8939902">
    <property type="pathway name" value="Regulation of RUNX2 expression and activity"/>
</dbReference>
<dbReference type="Reactome" id="R-CEL-8941858">
    <property type="pathway name" value="Regulation of RUNX3 expression and activity"/>
</dbReference>
<dbReference type="Reactome" id="R-CEL-8948751">
    <property type="pathway name" value="Regulation of PTEN stability and activity"/>
</dbReference>
<dbReference type="Reactome" id="R-CEL-8951664">
    <property type="pathway name" value="Neddylation"/>
</dbReference>
<dbReference type="Reactome" id="R-CEL-9755511">
    <property type="pathway name" value="KEAP1-NFE2L2 pathway"/>
</dbReference>
<dbReference type="Reactome" id="R-CEL-9762114">
    <property type="pathway name" value="GSK3B and BTRC:CUL1-mediated-degradation of NFE2L2"/>
</dbReference>
<dbReference type="Reactome" id="R-CEL-983168">
    <property type="pathway name" value="Antigen processing: Ubiquitination &amp; Proteasome degradation"/>
</dbReference>
<dbReference type="Reactome" id="R-CEL-9907900">
    <property type="pathway name" value="Proteasome assembly"/>
</dbReference>
<dbReference type="PRO" id="PR:Q23237"/>
<dbReference type="Proteomes" id="UP000001940">
    <property type="component" value="Chromosome II"/>
</dbReference>
<dbReference type="Bgee" id="WBGene00003949">
    <property type="expression patterns" value="Expressed in germ line (C elegans) and 4 other cell types or tissues"/>
</dbReference>
<dbReference type="GO" id="GO:0005829">
    <property type="term" value="C:cytosol"/>
    <property type="evidence" value="ECO:0000318"/>
    <property type="project" value="GO_Central"/>
</dbReference>
<dbReference type="GO" id="GO:0005634">
    <property type="term" value="C:nucleus"/>
    <property type="evidence" value="ECO:0000318"/>
    <property type="project" value="GO_Central"/>
</dbReference>
<dbReference type="GO" id="GO:0019774">
    <property type="term" value="C:proteasome core complex, beta-subunit complex"/>
    <property type="evidence" value="ECO:0000250"/>
    <property type="project" value="UniProtKB"/>
</dbReference>
<dbReference type="GO" id="GO:0043161">
    <property type="term" value="P:proteasome-mediated ubiquitin-dependent protein catabolic process"/>
    <property type="evidence" value="ECO:0000318"/>
    <property type="project" value="GO_Central"/>
</dbReference>
<dbReference type="CDD" id="cd03759">
    <property type="entry name" value="proteasome_beta_type_3"/>
    <property type="match status" value="1"/>
</dbReference>
<dbReference type="FunFam" id="3.60.20.10:FF:000003">
    <property type="entry name" value="Proteasome subunit beta type-3"/>
    <property type="match status" value="1"/>
</dbReference>
<dbReference type="Gene3D" id="3.60.20.10">
    <property type="entry name" value="Glutamine Phosphoribosylpyrophosphate, subunit 1, domain 1"/>
    <property type="match status" value="1"/>
</dbReference>
<dbReference type="InterPro" id="IPR029055">
    <property type="entry name" value="Ntn_hydrolases_N"/>
</dbReference>
<dbReference type="InterPro" id="IPR033811">
    <property type="entry name" value="Proteasome_beta_3"/>
</dbReference>
<dbReference type="InterPro" id="IPR016050">
    <property type="entry name" value="Proteasome_bsu_CS"/>
</dbReference>
<dbReference type="InterPro" id="IPR001353">
    <property type="entry name" value="Proteasome_sua/b"/>
</dbReference>
<dbReference type="InterPro" id="IPR023333">
    <property type="entry name" value="Proteasome_suB-type"/>
</dbReference>
<dbReference type="PANTHER" id="PTHR32194">
    <property type="entry name" value="METALLOPROTEASE TLDD"/>
    <property type="match status" value="1"/>
</dbReference>
<dbReference type="PANTHER" id="PTHR32194:SF10">
    <property type="entry name" value="PROTEASOME SUBUNIT BETA TYPE-3"/>
    <property type="match status" value="1"/>
</dbReference>
<dbReference type="Pfam" id="PF00227">
    <property type="entry name" value="Proteasome"/>
    <property type="match status" value="1"/>
</dbReference>
<dbReference type="SUPFAM" id="SSF56235">
    <property type="entry name" value="N-terminal nucleophile aminohydrolases (Ntn hydrolases)"/>
    <property type="match status" value="1"/>
</dbReference>
<dbReference type="PROSITE" id="PS00854">
    <property type="entry name" value="PROTEASOME_BETA_1"/>
    <property type="match status" value="1"/>
</dbReference>
<dbReference type="PROSITE" id="PS51476">
    <property type="entry name" value="PROTEASOME_BETA_2"/>
    <property type="match status" value="1"/>
</dbReference>
<protein>
    <recommendedName>
        <fullName>Proteasome subunit beta type-3</fullName>
        <shortName>Proteasome subunit beta 3</shortName>
    </recommendedName>
</protein>
<organism>
    <name type="scientific">Caenorhabditis elegans</name>
    <dbReference type="NCBI Taxonomy" id="6239"/>
    <lineage>
        <taxon>Eukaryota</taxon>
        <taxon>Metazoa</taxon>
        <taxon>Ecdysozoa</taxon>
        <taxon>Nematoda</taxon>
        <taxon>Chromadorea</taxon>
        <taxon>Rhabditida</taxon>
        <taxon>Rhabditina</taxon>
        <taxon>Rhabditomorpha</taxon>
        <taxon>Rhabditoidea</taxon>
        <taxon>Rhabditidae</taxon>
        <taxon>Peloderinae</taxon>
        <taxon>Caenorhabditis</taxon>
    </lineage>
</organism>
<gene>
    <name type="primary">pbs-3</name>
    <name type="ORF">Y38A8.2</name>
</gene>
<proteinExistence type="evidence at protein level"/>
<keyword id="KW-0963">Cytoplasm</keyword>
<keyword id="KW-0539">Nucleus</keyword>
<keyword id="KW-0647">Proteasome</keyword>
<keyword id="KW-1185">Reference proteome</keyword>
<feature type="chain" id="PRO_0000148061" description="Proteasome subunit beta type-3">
    <location>
        <begin position="1"/>
        <end position="204"/>
    </location>
</feature>
<sequence length="204" mass="22697">MSIMSYTGGTVVAMAGDECVCIASDLRIGEQMTTIATDQKKVHKVTDKVYVGLAGFQSDARTVLEKIMFRKNLYELRENRNIKPQVLSEMISNLAYQHRFGSYFTEPLVAGLDDTNKPYICCMDTIGCVSAPRDFVAVGTGQEYLLGVCENFWRENMKPDELFEATAQSILSCLERDAASGWGAVVYTITKDKVNVSTIKARMD</sequence>
<comment type="function">
    <text evidence="1">Non-catalytic component of the proteasome, a multicatalytic proteinase complex which is characterized by its ability to cleave peptides with Arg, Phe, Tyr, Leu, and Glu adjacent to the leaving group at neutral or slightly basic pH. The proteasome has an ATP-dependent proteolytic activity (By similarity).</text>
</comment>
<comment type="subunit">
    <text evidence="1">The 26S proteasome consists of a 20S proteasome core and two 19S regulatory subunits. The 20S proteasome core is composed of 28 subunits that are arranged in four stacked rings, resulting in a barrel-shaped structure. The two end rings are each formed by seven alpha subunits, and the two central rings are each formed by seven beta subunits. The catalytic chamber with the active sites is on the inside of the barrel (By similarity).</text>
</comment>
<comment type="interaction">
    <interactant intactId="EBI-314040">
        <id>Q23237</id>
    </interactant>
    <interactant intactId="EBI-317386">
        <id>O62102</id>
        <label>pbs-2</label>
    </interactant>
    <organismsDiffer>false</organismsDiffer>
    <experiments>5</experiments>
</comment>
<comment type="subcellular location">
    <subcellularLocation>
        <location evidence="2">Cytoplasm</location>
    </subcellularLocation>
    <subcellularLocation>
        <location evidence="1">Nucleus</location>
    </subcellularLocation>
</comment>
<comment type="similarity">
    <text evidence="2">Belongs to the peptidase T1B family.</text>
</comment>
<accession>Q23237</accession>
<evidence type="ECO:0000250" key="1"/>
<evidence type="ECO:0000255" key="2">
    <source>
        <dbReference type="PROSITE-ProRule" id="PRU00809"/>
    </source>
</evidence>
<name>PSB3_CAEEL</name>
<reference key="1">
    <citation type="journal article" date="1998" name="Science">
        <title>Genome sequence of the nematode C. elegans: a platform for investigating biology.</title>
        <authorList>
            <consortium name="The C. elegans sequencing consortium"/>
        </authorList>
    </citation>
    <scope>NUCLEOTIDE SEQUENCE [LARGE SCALE GENOMIC DNA]</scope>
    <source>
        <strain>Bristol N2</strain>
    </source>
</reference>